<feature type="chain" id="PRO_0000379045" description="Protein crossbronx-like">
    <location>
        <begin position="1"/>
        <end position="256"/>
    </location>
</feature>
<feature type="domain" description="UBC core" evidence="1">
    <location>
        <begin position="17"/>
        <end position="179"/>
    </location>
</feature>
<gene>
    <name type="ORF">GI18531</name>
</gene>
<sequence length="256" mass="29677">MCLETTLTKNKTLALINQGYQVLAEYEMIEQKKLRGIYAIPSYSSLLLWFGVIFIHSGMYSESAFRFSILLPDNFPDENCLPTVIFQKDIFHPHICPISHSLDLSPVFKDWHKDQHHIWHILKYIQAIFADPEGSVCNTHNGEPIPLTDVNNMEAMRLLANNRVDFALRAKASIVWSWKHMFDKPPINDPHYIIFERYRPEKHQAMMKRIKSSSWYSLPTSTSPPSTCVARIESARQLLAEEEAQTRGFHSLEMVE</sequence>
<proteinExistence type="inferred from homology"/>
<name>AKTP2_DROMO</name>
<accession>B4KS18</accession>
<dbReference type="EMBL" id="CH933808">
    <property type="protein sequence ID" value="EDW10454.1"/>
    <property type="molecule type" value="Genomic_DNA"/>
</dbReference>
<dbReference type="SMR" id="B4KS18"/>
<dbReference type="FunCoup" id="B4KS18">
    <property type="interactions" value="63"/>
</dbReference>
<dbReference type="EnsemblMetazoa" id="FBtr0169256">
    <property type="protein sequence ID" value="FBpp0167748"/>
    <property type="gene ID" value="FBgn0141270"/>
</dbReference>
<dbReference type="EnsemblMetazoa" id="XM_002006483.4">
    <property type="protein sequence ID" value="XP_002006519.1"/>
    <property type="gene ID" value="LOC6580716"/>
</dbReference>
<dbReference type="GeneID" id="6580716"/>
<dbReference type="KEGG" id="dmo:Dmoj_GI18531"/>
<dbReference type="eggNOG" id="KOG0429">
    <property type="taxonomic scope" value="Eukaryota"/>
</dbReference>
<dbReference type="HOGENOM" id="CLU_083049_2_0_1"/>
<dbReference type="InParanoid" id="B4KS18"/>
<dbReference type="OMA" id="DQHHIWH"/>
<dbReference type="OrthoDB" id="5596422at2759"/>
<dbReference type="PhylomeDB" id="B4KS18"/>
<dbReference type="Proteomes" id="UP000009192">
    <property type="component" value="Unassembled WGS sequence"/>
</dbReference>
<dbReference type="CDD" id="cd23814">
    <property type="entry name" value="UEV_AKTIP"/>
    <property type="match status" value="1"/>
</dbReference>
<dbReference type="Gene3D" id="3.10.110.10">
    <property type="entry name" value="Ubiquitin Conjugating Enzyme"/>
    <property type="match status" value="1"/>
</dbReference>
<dbReference type="InterPro" id="IPR000608">
    <property type="entry name" value="UBQ-conjugat_E2_core"/>
</dbReference>
<dbReference type="InterPro" id="IPR016135">
    <property type="entry name" value="UBQ-conjugating_enzyme/RWD"/>
</dbReference>
<dbReference type="Pfam" id="PF00179">
    <property type="entry name" value="UQ_con"/>
    <property type="match status" value="1"/>
</dbReference>
<dbReference type="SMART" id="SM00212">
    <property type="entry name" value="UBCc"/>
    <property type="match status" value="1"/>
</dbReference>
<dbReference type="SUPFAM" id="SSF54495">
    <property type="entry name" value="UBC-like"/>
    <property type="match status" value="1"/>
</dbReference>
<dbReference type="PROSITE" id="PS50127">
    <property type="entry name" value="UBC_2"/>
    <property type="match status" value="1"/>
</dbReference>
<evidence type="ECO:0000255" key="1">
    <source>
        <dbReference type="PROSITE-ProRule" id="PRU00388"/>
    </source>
</evidence>
<evidence type="ECO:0000305" key="2"/>
<organism>
    <name type="scientific">Drosophila mojavensis</name>
    <name type="common">Fruit fly</name>
    <dbReference type="NCBI Taxonomy" id="7230"/>
    <lineage>
        <taxon>Eukaryota</taxon>
        <taxon>Metazoa</taxon>
        <taxon>Ecdysozoa</taxon>
        <taxon>Arthropoda</taxon>
        <taxon>Hexapoda</taxon>
        <taxon>Insecta</taxon>
        <taxon>Pterygota</taxon>
        <taxon>Neoptera</taxon>
        <taxon>Endopterygota</taxon>
        <taxon>Diptera</taxon>
        <taxon>Brachycera</taxon>
        <taxon>Muscomorpha</taxon>
        <taxon>Ephydroidea</taxon>
        <taxon>Drosophilidae</taxon>
        <taxon>Drosophila</taxon>
    </lineage>
</organism>
<keyword id="KW-1185">Reference proteome</keyword>
<reference key="1">
    <citation type="journal article" date="2007" name="Nature">
        <title>Evolution of genes and genomes on the Drosophila phylogeny.</title>
        <authorList>
            <consortium name="Drosophila 12 genomes consortium"/>
        </authorList>
    </citation>
    <scope>NUCLEOTIDE SEQUENCE [LARGE SCALE GENOMIC DNA]</scope>
    <source>
        <strain>Tucson 15081-1352.22</strain>
    </source>
</reference>
<comment type="similarity">
    <text evidence="1">Belongs to the ubiquitin-conjugating enzyme family. FTS subfamily.</text>
</comment>
<comment type="caution">
    <text evidence="2">Lacks the conserved Cys residue necessary for ubiquitin-conjugating enzyme E2 activity.</text>
</comment>
<protein>
    <recommendedName>
        <fullName>Protein crossbronx-like</fullName>
    </recommendedName>
</protein>